<gene>
    <name evidence="3" type="primary">hisP</name>
    <name type="ordered locus">b2306</name>
    <name type="ordered locus">JW2303</name>
</gene>
<accession>P07109</accession>
<accession>P77299</accession>
<keyword id="KW-0029">Amino-acid transport</keyword>
<keyword id="KW-0067">ATP-binding</keyword>
<keyword id="KW-0997">Cell inner membrane</keyword>
<keyword id="KW-1003">Cell membrane</keyword>
<keyword id="KW-0903">Direct protein sequencing</keyword>
<keyword id="KW-0472">Membrane</keyword>
<keyword id="KW-0547">Nucleotide-binding</keyword>
<keyword id="KW-1185">Reference proteome</keyword>
<keyword id="KW-1278">Translocase</keyword>
<keyword id="KW-0813">Transport</keyword>
<protein>
    <recommendedName>
        <fullName evidence="4">Histidine/lysine/arginine/ornithine transport ATP-binding protein HisP</fullName>
        <ecNumber evidence="1">7.4.2.1</ecNumber>
    </recommendedName>
</protein>
<comment type="function">
    <text evidence="1">Part of the ABC transporter complex HisPMQJ involved in histidine transport. Is also part of the ABC transporter complex HisPMQ-ArgT involved in lysine/arginine/ornithine transport. Shows ATPase activity. Responsible for energy coupling to the transport system.</text>
</comment>
<comment type="catalytic activity">
    <reaction evidence="1">
        <text>a polar amino acid(out) + ATP + H2O = a polar amino acid(in) + ADP + phosphate + H(+)</text>
        <dbReference type="Rhea" id="RHEA:14673"/>
        <dbReference type="ChEBI" id="CHEBI:15377"/>
        <dbReference type="ChEBI" id="CHEBI:15378"/>
        <dbReference type="ChEBI" id="CHEBI:30616"/>
        <dbReference type="ChEBI" id="CHEBI:43474"/>
        <dbReference type="ChEBI" id="CHEBI:62031"/>
        <dbReference type="ChEBI" id="CHEBI:456216"/>
        <dbReference type="EC" id="7.4.2.1"/>
    </reaction>
    <physiologicalReaction direction="left-to-right" evidence="1">
        <dbReference type="Rhea" id="RHEA:14674"/>
    </physiologicalReaction>
</comment>
<comment type="catalytic activity">
    <reaction evidence="1">
        <text>L-histidine(out) + ATP + H2O = L-histidine(in) + ADP + phosphate + H(+)</text>
        <dbReference type="Rhea" id="RHEA:29891"/>
        <dbReference type="ChEBI" id="CHEBI:15377"/>
        <dbReference type="ChEBI" id="CHEBI:15378"/>
        <dbReference type="ChEBI" id="CHEBI:30616"/>
        <dbReference type="ChEBI" id="CHEBI:43474"/>
        <dbReference type="ChEBI" id="CHEBI:57595"/>
        <dbReference type="ChEBI" id="CHEBI:456216"/>
    </reaction>
    <physiologicalReaction direction="left-to-right" evidence="1">
        <dbReference type="Rhea" id="RHEA:29892"/>
    </physiologicalReaction>
</comment>
<comment type="catalytic activity">
    <reaction evidence="1">
        <text>L-lysine(out) + ATP + H2O = L-lysine(in) + ADP + phosphate + H(+)</text>
        <dbReference type="Rhea" id="RHEA:29887"/>
        <dbReference type="ChEBI" id="CHEBI:15377"/>
        <dbReference type="ChEBI" id="CHEBI:15378"/>
        <dbReference type="ChEBI" id="CHEBI:30616"/>
        <dbReference type="ChEBI" id="CHEBI:32551"/>
        <dbReference type="ChEBI" id="CHEBI:43474"/>
        <dbReference type="ChEBI" id="CHEBI:456216"/>
        <dbReference type="EC" id="7.4.2.1"/>
    </reaction>
    <physiologicalReaction direction="left-to-right" evidence="1">
        <dbReference type="Rhea" id="RHEA:29888"/>
    </physiologicalReaction>
</comment>
<comment type="catalytic activity">
    <reaction evidence="1">
        <text>L-arginine(out) + ATP + H2O = L-arginine(in) + ADP + phosphate + H(+)</text>
        <dbReference type="Rhea" id="RHEA:29879"/>
        <dbReference type="ChEBI" id="CHEBI:15377"/>
        <dbReference type="ChEBI" id="CHEBI:15378"/>
        <dbReference type="ChEBI" id="CHEBI:30616"/>
        <dbReference type="ChEBI" id="CHEBI:32682"/>
        <dbReference type="ChEBI" id="CHEBI:43474"/>
        <dbReference type="ChEBI" id="CHEBI:456216"/>
        <dbReference type="EC" id="7.4.2.1"/>
    </reaction>
    <physiologicalReaction direction="left-to-right" evidence="1">
        <dbReference type="Rhea" id="RHEA:29880"/>
    </physiologicalReaction>
</comment>
<comment type="catalytic activity">
    <reaction evidence="1">
        <text>L-ornithine(out) + ATP + H2O = L-ornithine(in) + ADP + phosphate + H(+)</text>
        <dbReference type="Rhea" id="RHEA:29883"/>
        <dbReference type="ChEBI" id="CHEBI:15377"/>
        <dbReference type="ChEBI" id="CHEBI:15378"/>
        <dbReference type="ChEBI" id="CHEBI:30616"/>
        <dbReference type="ChEBI" id="CHEBI:43474"/>
        <dbReference type="ChEBI" id="CHEBI:46911"/>
        <dbReference type="ChEBI" id="CHEBI:456216"/>
        <dbReference type="EC" id="7.4.2.1"/>
    </reaction>
    <physiologicalReaction direction="left-to-right" evidence="1">
        <dbReference type="Rhea" id="RHEA:29884"/>
    </physiologicalReaction>
</comment>
<comment type="subunit">
    <text evidence="1">The HisPMQJ complex is composed of two ATP-binding proteins (HisP), two transmembrane proteins (HisM and HisQ) and a solute-binding protein (HisJ). The HisPMQ-ArgT complex is composed of two ATP-binding proteins (HisP), two transmembrane proteins (HisM and HisQ) and a solute-binding protein (ArgT).</text>
</comment>
<comment type="subcellular location">
    <subcellularLocation>
        <location evidence="1">Cell inner membrane</location>
        <topology evidence="1">Peripheral membrane protein</topology>
    </subcellularLocation>
</comment>
<comment type="similarity">
    <text evidence="4">Belongs to the ABC transporter superfamily.</text>
</comment>
<sequence length="257" mass="28653">MSENKLNVIDLHKRYGEHEVLKGVSLQANAGDVISIIGSSGSGKSTFLRCINFLEKPSEGSIVVNGQTINLVRDKDGQLKVADKNQLRLLRTRLTMVFQHFNLWSHMTVLENVMEAPIQVLGLSKQEARERAVKYLAKVGIDERAQGKYPVHLSGGQQQRVSIARALAMEPEVLLFDEPTSALDPELVGEVLRIMQQLAEEGKTMVVVTHEMGFARHVSTHVIFLHQGKIEEEGAPEQLFGNPQSPRLQRFLKGSLK</sequence>
<organism>
    <name type="scientific">Escherichia coli (strain K12)</name>
    <dbReference type="NCBI Taxonomy" id="83333"/>
    <lineage>
        <taxon>Bacteria</taxon>
        <taxon>Pseudomonadati</taxon>
        <taxon>Pseudomonadota</taxon>
        <taxon>Gammaproteobacteria</taxon>
        <taxon>Enterobacterales</taxon>
        <taxon>Enterobacteriaceae</taxon>
        <taxon>Escherichia</taxon>
    </lineage>
</organism>
<proteinExistence type="evidence at protein level"/>
<evidence type="ECO:0000250" key="1">
    <source>
        <dbReference type="UniProtKB" id="P02915"/>
    </source>
</evidence>
<evidence type="ECO:0000255" key="2">
    <source>
        <dbReference type="PROSITE-ProRule" id="PRU00434"/>
    </source>
</evidence>
<evidence type="ECO:0000303" key="3">
    <source>
    </source>
</evidence>
<evidence type="ECO:0000305" key="4"/>
<reference key="1">
    <citation type="journal article" date="1987" name="Nucleic Acids Res.">
        <title>Sequence of the complete P protein gene and part of the M protein gene from the histidine transport operon of Escherichia coli compared to that of Salmonella typhimurium.</title>
        <authorList>
            <person name="Kraft R."/>
            <person name="Leinwand L.A."/>
        </authorList>
    </citation>
    <scope>NUCLEOTIDE SEQUENCE [GENOMIC DNA]</scope>
    <source>
        <strain>K12</strain>
    </source>
</reference>
<reference key="2">
    <citation type="journal article" date="1997" name="DNA Res.">
        <title>Construction of a contiguous 874-kb sequence of the Escherichia coli-K12 genome corresponding to 50.0-68.8 min on the linkage map and analysis of its sequence features.</title>
        <authorList>
            <person name="Yamamoto Y."/>
            <person name="Aiba H."/>
            <person name="Baba T."/>
            <person name="Hayashi K."/>
            <person name="Inada T."/>
            <person name="Isono K."/>
            <person name="Itoh T."/>
            <person name="Kimura S."/>
            <person name="Kitagawa M."/>
            <person name="Makino K."/>
            <person name="Miki T."/>
            <person name="Mitsuhashi N."/>
            <person name="Mizobuchi K."/>
            <person name="Mori H."/>
            <person name="Nakade S."/>
            <person name="Nakamura Y."/>
            <person name="Nashimoto H."/>
            <person name="Oshima T."/>
            <person name="Oyama S."/>
            <person name="Saito N."/>
            <person name="Sampei G."/>
            <person name="Satoh Y."/>
            <person name="Sivasundaram S."/>
            <person name="Tagami H."/>
            <person name="Takahashi H."/>
            <person name="Takeda J."/>
            <person name="Takemoto K."/>
            <person name="Uehara K."/>
            <person name="Wada C."/>
            <person name="Yamagata S."/>
            <person name="Horiuchi T."/>
        </authorList>
    </citation>
    <scope>NUCLEOTIDE SEQUENCE [LARGE SCALE GENOMIC DNA]</scope>
    <source>
        <strain>K12 / W3110 / ATCC 27325 / DSM 5911</strain>
    </source>
</reference>
<reference key="3">
    <citation type="journal article" date="1997" name="Science">
        <title>The complete genome sequence of Escherichia coli K-12.</title>
        <authorList>
            <person name="Blattner F.R."/>
            <person name="Plunkett G. III"/>
            <person name="Bloch C.A."/>
            <person name="Perna N.T."/>
            <person name="Burland V."/>
            <person name="Riley M."/>
            <person name="Collado-Vides J."/>
            <person name="Glasner J.D."/>
            <person name="Rode C.K."/>
            <person name="Mayhew G.F."/>
            <person name="Gregor J."/>
            <person name="Davis N.W."/>
            <person name="Kirkpatrick H.A."/>
            <person name="Goeden M.A."/>
            <person name="Rose D.J."/>
            <person name="Mau B."/>
            <person name="Shao Y."/>
        </authorList>
    </citation>
    <scope>NUCLEOTIDE SEQUENCE [LARGE SCALE GENOMIC DNA]</scope>
    <source>
        <strain>K12 / MG1655 / ATCC 47076</strain>
    </source>
</reference>
<reference key="4">
    <citation type="journal article" date="2006" name="Mol. Syst. Biol.">
        <title>Highly accurate genome sequences of Escherichia coli K-12 strains MG1655 and W3110.</title>
        <authorList>
            <person name="Hayashi K."/>
            <person name="Morooka N."/>
            <person name="Yamamoto Y."/>
            <person name="Fujita K."/>
            <person name="Isono K."/>
            <person name="Choi S."/>
            <person name="Ohtsubo E."/>
            <person name="Baba T."/>
            <person name="Wanner B.L."/>
            <person name="Mori H."/>
            <person name="Horiuchi T."/>
        </authorList>
    </citation>
    <scope>NUCLEOTIDE SEQUENCE [LARGE SCALE GENOMIC DNA]</scope>
    <source>
        <strain>K12 / W3110 / ATCC 27325 / DSM 5911</strain>
    </source>
</reference>
<reference key="5">
    <citation type="journal article" date="1990" name="J. Biol. Chem.">
        <title>The nucleotide-binding site of HisP, a membrane protein of the histidine permease. Identification of amino acid residues photoaffinity labeled by 8-azido-ATP.</title>
        <authorList>
            <person name="Mimura C.S."/>
            <person name="Admon A."/>
            <person name="Hurt K.A."/>
            <person name="Ames G.F.-L."/>
        </authorList>
    </citation>
    <scope>PROTEIN SEQUENCE OF 15-22 AND 30-44</scope>
</reference>
<reference key="6">
    <citation type="journal article" date="1997" name="Electrophoresis">
        <title>Escherichia coli proteome analysis using the gene-protein database.</title>
        <authorList>
            <person name="VanBogelen R.A."/>
            <person name="Abshire K.Z."/>
            <person name="Moldover B."/>
            <person name="Olson E.R."/>
            <person name="Neidhardt F.C."/>
        </authorList>
    </citation>
    <scope>IDENTIFICATION BY 2D-GEL</scope>
</reference>
<feature type="chain" id="PRO_0000092341" description="Histidine/lysine/arginine/ornithine transport ATP-binding protein HisP">
    <location>
        <begin position="1"/>
        <end position="257"/>
    </location>
</feature>
<feature type="domain" description="ABC transporter" evidence="2">
    <location>
        <begin position="6"/>
        <end position="252"/>
    </location>
</feature>
<feature type="binding site" evidence="1">
    <location>
        <position position="40"/>
    </location>
    <ligand>
        <name>ATP</name>
        <dbReference type="ChEBI" id="CHEBI:30616"/>
    </ligand>
</feature>
<feature type="binding site" evidence="1">
    <location>
        <position position="41"/>
    </location>
    <ligand>
        <name>ATP</name>
        <dbReference type="ChEBI" id="CHEBI:30616"/>
    </ligand>
</feature>
<feature type="binding site" evidence="1">
    <location>
        <position position="43"/>
    </location>
    <ligand>
        <name>ATP</name>
        <dbReference type="ChEBI" id="CHEBI:30616"/>
    </ligand>
</feature>
<feature type="binding site" evidence="1">
    <location>
        <position position="44"/>
    </location>
    <ligand>
        <name>ATP</name>
        <dbReference type="ChEBI" id="CHEBI:30616"/>
    </ligand>
</feature>
<feature type="binding site" evidence="1">
    <location>
        <position position="45"/>
    </location>
    <ligand>
        <name>ATP</name>
        <dbReference type="ChEBI" id="CHEBI:30616"/>
    </ligand>
</feature>
<feature type="binding site" evidence="1">
    <location>
        <position position="46"/>
    </location>
    <ligand>
        <name>ATP</name>
        <dbReference type="ChEBI" id="CHEBI:30616"/>
    </ligand>
</feature>
<feature type="sequence conflict" description="In Ref. 5; AA sequence." evidence="4" ref="5">
    <original>E</original>
    <variation>G</variation>
    <location>
        <position position="17"/>
    </location>
</feature>
<feature type="sequence conflict" description="In Ref. 1; CAA68511." evidence="4" ref="1">
    <original>V</original>
    <variation>L</variation>
    <location>
        <position position="191"/>
    </location>
</feature>
<name>HISP_ECOLI</name>
<dbReference type="EC" id="7.4.2.1" evidence="1"/>
<dbReference type="EMBL" id="Y00455">
    <property type="protein sequence ID" value="CAA68511.1"/>
    <property type="molecule type" value="Genomic_DNA"/>
</dbReference>
<dbReference type="EMBL" id="U00096">
    <property type="protein sequence ID" value="AAC75366.1"/>
    <property type="molecule type" value="Genomic_DNA"/>
</dbReference>
<dbReference type="EMBL" id="AP009048">
    <property type="protein sequence ID" value="BAA16143.1"/>
    <property type="molecule type" value="Genomic_DNA"/>
</dbReference>
<dbReference type="PIR" id="H65002">
    <property type="entry name" value="H65002"/>
</dbReference>
<dbReference type="RefSeq" id="NP_416809.1">
    <property type="nucleotide sequence ID" value="NC_000913.3"/>
</dbReference>
<dbReference type="RefSeq" id="WP_001293613.1">
    <property type="nucleotide sequence ID" value="NZ_LN832404.1"/>
</dbReference>
<dbReference type="SMR" id="P07109"/>
<dbReference type="BioGRID" id="4263202">
    <property type="interactions" value="16"/>
</dbReference>
<dbReference type="BioGRID" id="851130">
    <property type="interactions" value="2"/>
</dbReference>
<dbReference type="ComplexPortal" id="CPX-4328">
    <property type="entry name" value="Histidine ABC transporter complex"/>
</dbReference>
<dbReference type="ComplexPortal" id="CPX-4329">
    <property type="entry name" value="Polar amino acid ABC transporter complex"/>
</dbReference>
<dbReference type="FunCoup" id="P07109">
    <property type="interactions" value="283"/>
</dbReference>
<dbReference type="IntAct" id="P07109">
    <property type="interactions" value="5"/>
</dbReference>
<dbReference type="STRING" id="511145.b2306"/>
<dbReference type="TCDB" id="3.A.1.3.29">
    <property type="family name" value="the atp-binding cassette (abc) superfamily"/>
</dbReference>
<dbReference type="jPOST" id="P07109"/>
<dbReference type="PaxDb" id="511145-b2306"/>
<dbReference type="EnsemblBacteria" id="AAC75366">
    <property type="protein sequence ID" value="AAC75366"/>
    <property type="gene ID" value="b2306"/>
</dbReference>
<dbReference type="GeneID" id="946789"/>
<dbReference type="KEGG" id="ecj:JW2303"/>
<dbReference type="KEGG" id="eco:b2306"/>
<dbReference type="KEGG" id="ecoc:C3026_12860"/>
<dbReference type="PATRIC" id="fig|1411691.4.peg.4428"/>
<dbReference type="EchoBASE" id="EB0447"/>
<dbReference type="eggNOG" id="COG4598">
    <property type="taxonomic scope" value="Bacteria"/>
</dbReference>
<dbReference type="HOGENOM" id="CLU_000604_1_22_6"/>
<dbReference type="InParanoid" id="P07109"/>
<dbReference type="OMA" id="PREVFCL"/>
<dbReference type="OrthoDB" id="9802264at2"/>
<dbReference type="PhylomeDB" id="P07109"/>
<dbReference type="BioCyc" id="EcoCyc:HISP-MONOMER"/>
<dbReference type="PRO" id="PR:P07109"/>
<dbReference type="Proteomes" id="UP000000625">
    <property type="component" value="Chromosome"/>
</dbReference>
<dbReference type="GO" id="GO:0055052">
    <property type="term" value="C:ATP-binding cassette (ABC) transporter complex, substrate-binding subunit-containing"/>
    <property type="evidence" value="ECO:0000303"/>
    <property type="project" value="ComplexPortal"/>
</dbReference>
<dbReference type="GO" id="GO:0016020">
    <property type="term" value="C:membrane"/>
    <property type="evidence" value="ECO:0000303"/>
    <property type="project" value="ComplexPortal"/>
</dbReference>
<dbReference type="GO" id="GO:0015424">
    <property type="term" value="F:ABC-type amino acid transporter activity"/>
    <property type="evidence" value="ECO:0007669"/>
    <property type="project" value="InterPro"/>
</dbReference>
<dbReference type="GO" id="GO:0005524">
    <property type="term" value="F:ATP binding"/>
    <property type="evidence" value="ECO:0000255"/>
    <property type="project" value="EcoCyc"/>
</dbReference>
<dbReference type="GO" id="GO:0016887">
    <property type="term" value="F:ATP hydrolysis activity"/>
    <property type="evidence" value="ECO:0007669"/>
    <property type="project" value="InterPro"/>
</dbReference>
<dbReference type="GO" id="GO:0005291">
    <property type="term" value="F:high-affinity L-histidine transmembrane transporter activity"/>
    <property type="evidence" value="ECO:0000304"/>
    <property type="project" value="EcoCyc"/>
</dbReference>
<dbReference type="GO" id="GO:0089718">
    <property type="term" value="P:amino acid import across plasma membrane"/>
    <property type="evidence" value="ECO:0000303"/>
    <property type="project" value="ComplexPortal"/>
</dbReference>
<dbReference type="GO" id="GO:1903810">
    <property type="term" value="P:L-histidine import across plasma membrane"/>
    <property type="evidence" value="ECO:0000304"/>
    <property type="project" value="EcoCyc"/>
</dbReference>
<dbReference type="GO" id="GO:0089709">
    <property type="term" value="P:L-histidine transmembrane transport"/>
    <property type="evidence" value="ECO:0000304"/>
    <property type="project" value="EcoCyc"/>
</dbReference>
<dbReference type="CDD" id="cd03262">
    <property type="entry name" value="ABC_HisP_GlnQ"/>
    <property type="match status" value="1"/>
</dbReference>
<dbReference type="FunFam" id="3.40.50.300:FF:000020">
    <property type="entry name" value="Amino acid ABC transporter ATP-binding component"/>
    <property type="match status" value="1"/>
</dbReference>
<dbReference type="Gene3D" id="3.40.50.300">
    <property type="entry name" value="P-loop containing nucleotide triphosphate hydrolases"/>
    <property type="match status" value="1"/>
</dbReference>
<dbReference type="InterPro" id="IPR003593">
    <property type="entry name" value="AAA+_ATPase"/>
</dbReference>
<dbReference type="InterPro" id="IPR030679">
    <property type="entry name" value="ABC_ATPase_HisP-typ"/>
</dbReference>
<dbReference type="InterPro" id="IPR003439">
    <property type="entry name" value="ABC_transporter-like_ATP-bd"/>
</dbReference>
<dbReference type="InterPro" id="IPR017871">
    <property type="entry name" value="ABC_transporter-like_CS"/>
</dbReference>
<dbReference type="InterPro" id="IPR050086">
    <property type="entry name" value="MetN_ABC_transporter-like"/>
</dbReference>
<dbReference type="InterPro" id="IPR027417">
    <property type="entry name" value="P-loop_NTPase"/>
</dbReference>
<dbReference type="NCBIfam" id="NF007908">
    <property type="entry name" value="PRK10619.1"/>
    <property type="match status" value="1"/>
</dbReference>
<dbReference type="PANTHER" id="PTHR43166">
    <property type="entry name" value="AMINO ACID IMPORT ATP-BINDING PROTEIN"/>
    <property type="match status" value="1"/>
</dbReference>
<dbReference type="PANTHER" id="PTHR43166:SF15">
    <property type="entry name" value="HISTIDINE TRANSPORT ATP-BINDING PROTEIN HISP"/>
    <property type="match status" value="1"/>
</dbReference>
<dbReference type="Pfam" id="PF00005">
    <property type="entry name" value="ABC_tran"/>
    <property type="match status" value="1"/>
</dbReference>
<dbReference type="PIRSF" id="PIRSF039085">
    <property type="entry name" value="ABC_ATPase_HisP"/>
    <property type="match status" value="1"/>
</dbReference>
<dbReference type="SMART" id="SM00382">
    <property type="entry name" value="AAA"/>
    <property type="match status" value="1"/>
</dbReference>
<dbReference type="SUPFAM" id="SSF52540">
    <property type="entry name" value="P-loop containing nucleoside triphosphate hydrolases"/>
    <property type="match status" value="1"/>
</dbReference>
<dbReference type="PROSITE" id="PS00211">
    <property type="entry name" value="ABC_TRANSPORTER_1"/>
    <property type="match status" value="1"/>
</dbReference>
<dbReference type="PROSITE" id="PS50893">
    <property type="entry name" value="ABC_TRANSPORTER_2"/>
    <property type="match status" value="1"/>
</dbReference>